<sequence>MLFTIQLIIILICLFYGARKGGIALGLLGGIGLVILVFVFHLQPGKPPVDVMLVIIAVVAASATLQASGGLDVMLQIAEKLLRRNPKYVSIVAPFVTCTLTILCGTGHVVYTILPIIYDVAIKNNIRPERPMAASSIGAQMGIIASPVSVAVVSLVAMLGNVTFDGRHLEFLDLLAITIPSTLIGILAIGIFSWFRGKDLDKDEEFQKFISVPENREYVYGDTATLLDKKLPKSNWLAMWIFLGAIAVVALLGADSDLRPSFGGKPLSMVLVIQMFMLLTGALIIILTKTNPASISKNEVFRSGMIAIVAVYGIAWMAETMFGAHMSEIQGVLGEMVKEYPWAYAIVLLLVSKFVNSQAAALAAIVPVALAIGVDPAYIVASAPACYGYYILPTYPSDLAAIQFDRSGTTHIGRFVINHSFILPGLIGVSVSCVFGWIFAAMYGFL</sequence>
<name>DCUB_ECOL6</name>
<comment type="function">
    <text evidence="1">Bifunctional protein with a transport and a regulatory function. Responsible for the transport of C4-dicarboxylates during anaerobic growth. Catalyzes the uptake of fumarate, malate, aspartate or D-tartrate coupled to the export of succinate. May function primarily as a C4-dicarboxylate transporter during fumarate respiration. Required for anaerobic growth on D-tartrate.</text>
</comment>
<comment type="function">
    <text evidence="1">In addition, possesses a regulatory function, which is independent from the transport function, and is required for the response of the DcuS/DcuR two-component system to C4-dicarboxylates (By similarity). DcuB interacts physically with DcuS and converts DcuS to the C4-dicarboxylate responsive form (By similarity).</text>
</comment>
<comment type="catalytic activity">
    <reaction evidence="1">
        <text>fumarate(in) + succinate(out) = fumarate(out) + succinate(in)</text>
        <dbReference type="Rhea" id="RHEA:29323"/>
        <dbReference type="ChEBI" id="CHEBI:29806"/>
        <dbReference type="ChEBI" id="CHEBI:30031"/>
    </reaction>
    <physiologicalReaction direction="right-to-left" evidence="1">
        <dbReference type="Rhea" id="RHEA:29325"/>
    </physiologicalReaction>
</comment>
<comment type="catalytic activity">
    <reaction evidence="1">
        <text>(S)-malate(in) + succinate(out) = (S)-malate(out) + succinate(in)</text>
        <dbReference type="Rhea" id="RHEA:29327"/>
        <dbReference type="ChEBI" id="CHEBI:15589"/>
        <dbReference type="ChEBI" id="CHEBI:30031"/>
    </reaction>
    <physiologicalReaction direction="right-to-left" evidence="1">
        <dbReference type="Rhea" id="RHEA:29329"/>
    </physiologicalReaction>
</comment>
<comment type="catalytic activity">
    <reaction evidence="1">
        <text>L-aspartate(in) + succinate(out) = L-aspartate(out) + succinate(in)</text>
        <dbReference type="Rhea" id="RHEA:29343"/>
        <dbReference type="ChEBI" id="CHEBI:29991"/>
        <dbReference type="ChEBI" id="CHEBI:30031"/>
    </reaction>
    <physiologicalReaction direction="right-to-left" evidence="1">
        <dbReference type="Rhea" id="RHEA:29345"/>
    </physiologicalReaction>
</comment>
<comment type="catalytic activity">
    <reaction evidence="1">
        <text>(S,S)-tartrate(out) + succinate(in) = (S,S)-tartrate(in) + succinate(out)</text>
        <dbReference type="Rhea" id="RHEA:34763"/>
        <dbReference type="ChEBI" id="CHEBI:30031"/>
        <dbReference type="ChEBI" id="CHEBI:30927"/>
    </reaction>
    <physiologicalReaction direction="left-to-right" evidence="1">
        <dbReference type="Rhea" id="RHEA:34764"/>
    </physiologicalReaction>
</comment>
<comment type="subunit">
    <text evidence="1">Interacts with DcuS.</text>
</comment>
<comment type="subcellular location">
    <subcellularLocation>
        <location evidence="1">Cell inner membrane</location>
        <topology evidence="1">Multi-pass membrane protein</topology>
    </subcellularLocation>
</comment>
<comment type="similarity">
    <text evidence="2">Belongs to the DcuA/DcuB transporter (TC 2.A.13.1) family.</text>
</comment>
<keyword id="KW-0050">Antiport</keyword>
<keyword id="KW-0997">Cell inner membrane</keyword>
<keyword id="KW-1003">Cell membrane</keyword>
<keyword id="KW-0472">Membrane</keyword>
<keyword id="KW-1185">Reference proteome</keyword>
<keyword id="KW-0812">Transmembrane</keyword>
<keyword id="KW-1133">Transmembrane helix</keyword>
<keyword id="KW-0813">Transport</keyword>
<protein>
    <recommendedName>
        <fullName evidence="1">Anaerobic C4-dicarboxylate transporter DcuB</fullName>
    </recommendedName>
</protein>
<accession>P0ABP0</accession>
<accession>P14409</accession>
<evidence type="ECO:0000250" key="1">
    <source>
        <dbReference type="UniProtKB" id="P0ABN9"/>
    </source>
</evidence>
<evidence type="ECO:0000305" key="2"/>
<dbReference type="EMBL" id="AE014075">
    <property type="protein sequence ID" value="AAN83550.1"/>
    <property type="molecule type" value="Genomic_DNA"/>
</dbReference>
<dbReference type="RefSeq" id="WP_000899522.1">
    <property type="nucleotide sequence ID" value="NZ_CP051263.1"/>
</dbReference>
<dbReference type="STRING" id="199310.c5128"/>
<dbReference type="GeneID" id="93777709"/>
<dbReference type="KEGG" id="ecc:c5128"/>
<dbReference type="eggNOG" id="COG2704">
    <property type="taxonomic scope" value="Bacteria"/>
</dbReference>
<dbReference type="HOGENOM" id="CLU_036056_1_1_6"/>
<dbReference type="BioCyc" id="ECOL199310:C5128-MONOMER"/>
<dbReference type="Proteomes" id="UP000001410">
    <property type="component" value="Chromosome"/>
</dbReference>
<dbReference type="GO" id="GO:0005886">
    <property type="term" value="C:plasma membrane"/>
    <property type="evidence" value="ECO:0007669"/>
    <property type="project" value="UniProtKB-SubCell"/>
</dbReference>
<dbReference type="GO" id="GO:0015297">
    <property type="term" value="F:antiporter activity"/>
    <property type="evidence" value="ECO:0007669"/>
    <property type="project" value="UniProtKB-KW"/>
</dbReference>
<dbReference type="GO" id="GO:0015556">
    <property type="term" value="F:C4-dicarboxylate transmembrane transporter activity"/>
    <property type="evidence" value="ECO:0007669"/>
    <property type="project" value="InterPro"/>
</dbReference>
<dbReference type="InterPro" id="IPR004668">
    <property type="entry name" value="Anaer_Dcu_memb_transpt"/>
</dbReference>
<dbReference type="NCBIfam" id="TIGR00770">
    <property type="entry name" value="Dcu"/>
    <property type="match status" value="1"/>
</dbReference>
<dbReference type="NCBIfam" id="NF006927">
    <property type="entry name" value="PRK09412.1"/>
    <property type="match status" value="1"/>
</dbReference>
<dbReference type="NCBIfam" id="NF009136">
    <property type="entry name" value="PRK12489.1"/>
    <property type="match status" value="1"/>
</dbReference>
<dbReference type="PANTHER" id="PTHR36106">
    <property type="entry name" value="ANAEROBIC C4-DICARBOXYLATE TRANSPORTER DCUB"/>
    <property type="match status" value="1"/>
</dbReference>
<dbReference type="PANTHER" id="PTHR36106:SF3">
    <property type="entry name" value="ANAEROBIC C4-DICARBOXYLATE TRANSPORTER DCUB"/>
    <property type="match status" value="1"/>
</dbReference>
<dbReference type="Pfam" id="PF03605">
    <property type="entry name" value="DcuA_DcuB"/>
    <property type="match status" value="1"/>
</dbReference>
<dbReference type="PIRSF" id="PIRSF004539">
    <property type="entry name" value="C4-dicrbxl_trns"/>
    <property type="match status" value="1"/>
</dbReference>
<reference key="1">
    <citation type="journal article" date="2002" name="Proc. Natl. Acad. Sci. U.S.A.">
        <title>Extensive mosaic structure revealed by the complete genome sequence of uropathogenic Escherichia coli.</title>
        <authorList>
            <person name="Welch R.A."/>
            <person name="Burland V."/>
            <person name="Plunkett G. III"/>
            <person name="Redford P."/>
            <person name="Roesch P."/>
            <person name="Rasko D."/>
            <person name="Buckles E.L."/>
            <person name="Liou S.-R."/>
            <person name="Boutin A."/>
            <person name="Hackett J."/>
            <person name="Stroud D."/>
            <person name="Mayhew G.F."/>
            <person name="Rose D.J."/>
            <person name="Zhou S."/>
            <person name="Schwartz D.C."/>
            <person name="Perna N.T."/>
            <person name="Mobley H.L.T."/>
            <person name="Donnenberg M.S."/>
            <person name="Blattner F.R."/>
        </authorList>
    </citation>
    <scope>NUCLEOTIDE SEQUENCE [LARGE SCALE GENOMIC DNA]</scope>
    <source>
        <strain>CFT073 / ATCC 700928 / UPEC</strain>
    </source>
</reference>
<gene>
    <name type="primary">dcuB</name>
    <name type="ordered locus">c5128</name>
</gene>
<organism>
    <name type="scientific">Escherichia coli O6:H1 (strain CFT073 / ATCC 700928 / UPEC)</name>
    <dbReference type="NCBI Taxonomy" id="199310"/>
    <lineage>
        <taxon>Bacteria</taxon>
        <taxon>Pseudomonadati</taxon>
        <taxon>Pseudomonadota</taxon>
        <taxon>Gammaproteobacteria</taxon>
        <taxon>Enterobacterales</taxon>
        <taxon>Enterobacteriaceae</taxon>
        <taxon>Escherichia</taxon>
    </lineage>
</organism>
<proteinExistence type="inferred from homology"/>
<feature type="chain" id="PRO_0000170357" description="Anaerobic C4-dicarboxylate transporter DcuB">
    <location>
        <begin position="1"/>
        <end position="446"/>
    </location>
</feature>
<feature type="transmembrane region" description="Helical" evidence="1">
    <location>
        <begin position="1"/>
        <end position="18"/>
    </location>
</feature>
<feature type="topological domain" description="Cytoplasmic" evidence="1">
    <location>
        <begin position="19"/>
        <end position="22"/>
    </location>
</feature>
<feature type="transmembrane region" description="Helical" evidence="1">
    <location>
        <begin position="23"/>
        <end position="39"/>
    </location>
</feature>
<feature type="topological domain" description="Periplasmic" evidence="1">
    <location>
        <begin position="40"/>
        <end position="53"/>
    </location>
</feature>
<feature type="transmembrane region" description="Helical" evidence="1">
    <location>
        <begin position="54"/>
        <end position="70"/>
    </location>
</feature>
<feature type="topological domain" description="Cytoplasmic" evidence="1">
    <location>
        <begin position="71"/>
        <end position="87"/>
    </location>
</feature>
<feature type="intramembrane region" description="Helical" evidence="1">
    <location>
        <begin position="88"/>
        <end position="105"/>
    </location>
</feature>
<feature type="intramembrane region" evidence="1">
    <location>
        <begin position="106"/>
        <end position="114"/>
    </location>
</feature>
<feature type="intramembrane region" description="Helical" evidence="1">
    <location>
        <begin position="115"/>
        <end position="128"/>
    </location>
</feature>
<feature type="intramembrane region" evidence="1">
    <location>
        <begin position="129"/>
        <end position="133"/>
    </location>
</feature>
<feature type="intramembrane region" description="Helical" evidence="1">
    <location>
        <begin position="134"/>
        <end position="159"/>
    </location>
</feature>
<feature type="topological domain" description="Periplasmic" evidence="1">
    <location>
        <begin position="160"/>
        <end position="178"/>
    </location>
</feature>
<feature type="transmembrane region" description="Helical" evidence="1">
    <location>
        <begin position="179"/>
        <end position="194"/>
    </location>
</feature>
<feature type="topological domain" description="Cytoplasmic" evidence="1">
    <location>
        <begin position="195"/>
        <end position="234"/>
    </location>
</feature>
<feature type="transmembrane region" description="Helical" evidence="1">
    <location>
        <begin position="235"/>
        <end position="252"/>
    </location>
</feature>
<feature type="topological domain" description="Periplasmic" evidence="1">
    <location>
        <begin position="253"/>
        <end position="268"/>
    </location>
</feature>
<feature type="transmembrane region" description="Helical" evidence="1">
    <location>
        <begin position="269"/>
        <end position="287"/>
    </location>
</feature>
<feature type="topological domain" description="Cytoplasmic" evidence="1">
    <location>
        <begin position="288"/>
        <end position="313"/>
    </location>
</feature>
<feature type="transmembrane region" description="Helical" evidence="1">
    <location>
        <begin position="314"/>
        <end position="331"/>
    </location>
</feature>
<feature type="topological domain" description="Periplasmic" evidence="1">
    <location>
        <begin position="332"/>
        <end position="341"/>
    </location>
</feature>
<feature type="transmembrane region" description="Helical" evidence="1">
    <location>
        <begin position="342"/>
        <end position="365"/>
    </location>
</feature>
<feature type="topological domain" description="Cytoplasmic" evidence="1">
    <location>
        <begin position="366"/>
        <end position="425"/>
    </location>
</feature>
<feature type="transmembrane region" description="Helical" evidence="1">
    <location>
        <begin position="426"/>
        <end position="443"/>
    </location>
</feature>
<feature type="topological domain" description="Periplasmic" evidence="1">
    <location>
        <begin position="444"/>
        <end position="446"/>
    </location>
</feature>